<sequence>MSEETATSDNDNSYARVRAVVMTRDDSSGGWLPLGGSGLSSVTVFRVPHQEENGCADFFIRGERLRDKMVVLECMLKKDLIYNKVTPTFHHWKIDDKKFGLTFQSPADARAFDRGIRRAIEDISLGCPASKTEAEGGDDDLQTTEEDTSRSLVKDHFFQQETVVTSEPYRSSDIRPLPFEDLNARRVYLQSQVSQIPFSQQGLDIQSRSMEYVQRQISKECGSLKSQTRVPLKSIRHVSFQDEDEIVRINPRDILIRRYADYRHPDMWKNDLERDDTDSSVPFSKQDSKKSDYLYHCGDETKLSSLKDSVVFKTQPPSLKFKSKRRKEDGERSRCVYCQERFNHEENARGKCQDAPDPVKRCIYQVSCMLCAESMLYHCMSDSEGDFSDPCSCDTSDDKFCLRWLALVALSFIVPCMCCYVPLRMCHRCGEACGCCGGKHKAAG</sequence>
<comment type="function">
    <text evidence="2 7 9 13 14">Tyrosine kinase substrate that inhibits growth-factor-mediated activation of MAP kinase (PubMed:11493923). Negatively regulates hematopoiesis of bone marrow (PubMed:15465815). Inhibits fibroblast growth factor (FGF)-induced retinal lens fiber differentiation, probably by inhibiting FGF-mediated phosphorylation of ERK1/2 (PubMed:29501879). Attenuates actin stress fiber formation via inhibition of TESK1-mediated phosphorylation of cofilin (By similarity). Inhibits TGFB-induced epithelial-to-mesenchymal transition in lens epithelial cells (PubMed:25576668).</text>
</comment>
<comment type="subunit">
    <text evidence="2 7 11 12">Homodimer and heterodimer (By similarity). Able to interact with SPRED2 to form heterodimers (By similarity). Interacts (via C-terminus) with TAOK1/MARKK (via C-terminus); the interaction does not affect TAOK1 kinase activity (By similarity). Interacts (via C-terminus) with TESK1 (via C-terminus); the interaction inhibits TESK1 kinase activity (PubMed:17974561). Interacts with CAV1 (By similarity). Interacts with RAS (PubMed:11493923). Interacts with palmitoyltransferase ZDHHC17/HIP14; the interaction leads to palmitoylation of SPRED1 (PubMed:24705354).</text>
</comment>
<comment type="subcellular location">
    <subcellularLocation>
        <location evidence="7">Cell membrane</location>
        <topology evidence="7">Peripheral membrane protein</topology>
    </subcellularLocation>
    <subcellularLocation>
        <location evidence="7">Membrane</location>
        <location evidence="7">Caveola</location>
        <topology evidence="7">Peripheral membrane protein</topology>
    </subcellularLocation>
    <subcellularLocation>
        <location evidence="7">Nucleus</location>
    </subcellularLocation>
    <text evidence="1">Localized in cholesterol-rich membrane raft/caveola fractions.</text>
</comment>
<comment type="alternative products">
    <event type="alternative splicing"/>
    <isoform>
        <id>Q924S8-1</id>
        <name>1</name>
        <sequence type="displayed"/>
    </isoform>
    <isoform>
        <id>Q924S8-2</id>
        <name>2</name>
        <sequence type="described" ref="VSP_012412 VSP_012413"/>
    </isoform>
</comment>
<comment type="tissue specificity">
    <text evidence="7 8 9 10">Expressed in brain. Weakly expressed in lung, heart, liver, kidney, intestine, spleen, testis, thymus, colon and ovary. Also expressed in embryonic tissues such as heart, lung, liver and brain. Highly expressed in IL3-dependent hematopoietic cell lines (Ba/F3 and MC/9) and bone marrow-derived mast cells (BMMC).</text>
</comment>
<comment type="PTM">
    <text evidence="12">Palmitoylated by ZDHHC17/HIP14.</text>
</comment>
<comment type="PTM">
    <text evidence="2">Ubiquitinated.</text>
</comment>
<comment type="PTM">
    <text evidence="7">Phosphorylated on tyrosine.</text>
</comment>
<keyword id="KW-0007">Acetylation</keyword>
<keyword id="KW-0025">Alternative splicing</keyword>
<keyword id="KW-1003">Cell membrane</keyword>
<keyword id="KW-0449">Lipoprotein</keyword>
<keyword id="KW-0472">Membrane</keyword>
<keyword id="KW-0488">Methylation</keyword>
<keyword id="KW-0539">Nucleus</keyword>
<keyword id="KW-0564">Palmitate</keyword>
<keyword id="KW-0597">Phosphoprotein</keyword>
<keyword id="KW-1185">Reference proteome</keyword>
<keyword id="KW-0832">Ubl conjugation</keyword>
<reference key="1">
    <citation type="journal article" date="2001" name="Nature">
        <title>Spred is a Sprouty-related suppressor of Ras signalling.</title>
        <authorList>
            <person name="Wakioka T."/>
            <person name="Sasaki A."/>
            <person name="Kato R."/>
            <person name="Shouda T."/>
            <person name="Matsumoto A."/>
            <person name="Miyoshi K."/>
            <person name="Tsuneoka M."/>
            <person name="Komiya S."/>
            <person name="Baron R."/>
            <person name="Yoshimura A."/>
        </authorList>
    </citation>
    <scope>NUCLEOTIDE SEQUENCE [MRNA] (ISOFORM 1)</scope>
    <scope>SUBCELLULAR LOCATION</scope>
    <scope>INTERACTION WITH RAS</scope>
    <scope>PHOSPHORYLATION</scope>
    <scope>TISSUE SPECIFICITY</scope>
    <scope>FUNCTION</scope>
</reference>
<reference key="2">
    <citation type="journal article" date="2005" name="Science">
        <title>The transcriptional landscape of the mammalian genome.</title>
        <authorList>
            <person name="Carninci P."/>
            <person name="Kasukawa T."/>
            <person name="Katayama S."/>
            <person name="Gough J."/>
            <person name="Frith M.C."/>
            <person name="Maeda N."/>
            <person name="Oyama R."/>
            <person name="Ravasi T."/>
            <person name="Lenhard B."/>
            <person name="Wells C."/>
            <person name="Kodzius R."/>
            <person name="Shimokawa K."/>
            <person name="Bajic V.B."/>
            <person name="Brenner S.E."/>
            <person name="Batalov S."/>
            <person name="Forrest A.R."/>
            <person name="Zavolan M."/>
            <person name="Davis M.J."/>
            <person name="Wilming L.G."/>
            <person name="Aidinis V."/>
            <person name="Allen J.E."/>
            <person name="Ambesi-Impiombato A."/>
            <person name="Apweiler R."/>
            <person name="Aturaliya R.N."/>
            <person name="Bailey T.L."/>
            <person name="Bansal M."/>
            <person name="Baxter L."/>
            <person name="Beisel K.W."/>
            <person name="Bersano T."/>
            <person name="Bono H."/>
            <person name="Chalk A.M."/>
            <person name="Chiu K.P."/>
            <person name="Choudhary V."/>
            <person name="Christoffels A."/>
            <person name="Clutterbuck D.R."/>
            <person name="Crowe M.L."/>
            <person name="Dalla E."/>
            <person name="Dalrymple B.P."/>
            <person name="de Bono B."/>
            <person name="Della Gatta G."/>
            <person name="di Bernardo D."/>
            <person name="Down T."/>
            <person name="Engstrom P."/>
            <person name="Fagiolini M."/>
            <person name="Faulkner G."/>
            <person name="Fletcher C.F."/>
            <person name="Fukushima T."/>
            <person name="Furuno M."/>
            <person name="Futaki S."/>
            <person name="Gariboldi M."/>
            <person name="Georgii-Hemming P."/>
            <person name="Gingeras T.R."/>
            <person name="Gojobori T."/>
            <person name="Green R.E."/>
            <person name="Gustincich S."/>
            <person name="Harbers M."/>
            <person name="Hayashi Y."/>
            <person name="Hensch T.K."/>
            <person name="Hirokawa N."/>
            <person name="Hill D."/>
            <person name="Huminiecki L."/>
            <person name="Iacono M."/>
            <person name="Ikeo K."/>
            <person name="Iwama A."/>
            <person name="Ishikawa T."/>
            <person name="Jakt M."/>
            <person name="Kanapin A."/>
            <person name="Katoh M."/>
            <person name="Kawasawa Y."/>
            <person name="Kelso J."/>
            <person name="Kitamura H."/>
            <person name="Kitano H."/>
            <person name="Kollias G."/>
            <person name="Krishnan S.P."/>
            <person name="Kruger A."/>
            <person name="Kummerfeld S.K."/>
            <person name="Kurochkin I.V."/>
            <person name="Lareau L.F."/>
            <person name="Lazarevic D."/>
            <person name="Lipovich L."/>
            <person name="Liu J."/>
            <person name="Liuni S."/>
            <person name="McWilliam S."/>
            <person name="Madan Babu M."/>
            <person name="Madera M."/>
            <person name="Marchionni L."/>
            <person name="Matsuda H."/>
            <person name="Matsuzawa S."/>
            <person name="Miki H."/>
            <person name="Mignone F."/>
            <person name="Miyake S."/>
            <person name="Morris K."/>
            <person name="Mottagui-Tabar S."/>
            <person name="Mulder N."/>
            <person name="Nakano N."/>
            <person name="Nakauchi H."/>
            <person name="Ng P."/>
            <person name="Nilsson R."/>
            <person name="Nishiguchi S."/>
            <person name="Nishikawa S."/>
            <person name="Nori F."/>
            <person name="Ohara O."/>
            <person name="Okazaki Y."/>
            <person name="Orlando V."/>
            <person name="Pang K.C."/>
            <person name="Pavan W.J."/>
            <person name="Pavesi G."/>
            <person name="Pesole G."/>
            <person name="Petrovsky N."/>
            <person name="Piazza S."/>
            <person name="Reed J."/>
            <person name="Reid J.F."/>
            <person name="Ring B.Z."/>
            <person name="Ringwald M."/>
            <person name="Rost B."/>
            <person name="Ruan Y."/>
            <person name="Salzberg S.L."/>
            <person name="Sandelin A."/>
            <person name="Schneider C."/>
            <person name="Schoenbach C."/>
            <person name="Sekiguchi K."/>
            <person name="Semple C.A."/>
            <person name="Seno S."/>
            <person name="Sessa L."/>
            <person name="Sheng Y."/>
            <person name="Shibata Y."/>
            <person name="Shimada H."/>
            <person name="Shimada K."/>
            <person name="Silva D."/>
            <person name="Sinclair B."/>
            <person name="Sperling S."/>
            <person name="Stupka E."/>
            <person name="Sugiura K."/>
            <person name="Sultana R."/>
            <person name="Takenaka Y."/>
            <person name="Taki K."/>
            <person name="Tammoja K."/>
            <person name="Tan S.L."/>
            <person name="Tang S."/>
            <person name="Taylor M.S."/>
            <person name="Tegner J."/>
            <person name="Teichmann S.A."/>
            <person name="Ueda H.R."/>
            <person name="van Nimwegen E."/>
            <person name="Verardo R."/>
            <person name="Wei C.L."/>
            <person name="Yagi K."/>
            <person name="Yamanishi H."/>
            <person name="Zabarovsky E."/>
            <person name="Zhu S."/>
            <person name="Zimmer A."/>
            <person name="Hide W."/>
            <person name="Bult C."/>
            <person name="Grimmond S.M."/>
            <person name="Teasdale R.D."/>
            <person name="Liu E.T."/>
            <person name="Brusic V."/>
            <person name="Quackenbush J."/>
            <person name="Wahlestedt C."/>
            <person name="Mattick J.S."/>
            <person name="Hume D.A."/>
            <person name="Kai C."/>
            <person name="Sasaki D."/>
            <person name="Tomaru Y."/>
            <person name="Fukuda S."/>
            <person name="Kanamori-Katayama M."/>
            <person name="Suzuki M."/>
            <person name="Aoki J."/>
            <person name="Arakawa T."/>
            <person name="Iida J."/>
            <person name="Imamura K."/>
            <person name="Itoh M."/>
            <person name="Kato T."/>
            <person name="Kawaji H."/>
            <person name="Kawagashira N."/>
            <person name="Kawashima T."/>
            <person name="Kojima M."/>
            <person name="Kondo S."/>
            <person name="Konno H."/>
            <person name="Nakano K."/>
            <person name="Ninomiya N."/>
            <person name="Nishio T."/>
            <person name="Okada M."/>
            <person name="Plessy C."/>
            <person name="Shibata K."/>
            <person name="Shiraki T."/>
            <person name="Suzuki S."/>
            <person name="Tagami M."/>
            <person name="Waki K."/>
            <person name="Watahiki A."/>
            <person name="Okamura-Oho Y."/>
            <person name="Suzuki H."/>
            <person name="Kawai J."/>
            <person name="Hayashizaki Y."/>
        </authorList>
    </citation>
    <scope>NUCLEOTIDE SEQUENCE [LARGE SCALE MRNA] (ISOFORM 1)</scope>
    <source>
        <strain>NOD</strain>
    </source>
</reference>
<reference key="3">
    <citation type="journal article" date="2009" name="PLoS Biol.">
        <title>Lineage-specific biology revealed by a finished genome assembly of the mouse.</title>
        <authorList>
            <person name="Church D.M."/>
            <person name="Goodstadt L."/>
            <person name="Hillier L.W."/>
            <person name="Zody M.C."/>
            <person name="Goldstein S."/>
            <person name="She X."/>
            <person name="Bult C.J."/>
            <person name="Agarwala R."/>
            <person name="Cherry J.L."/>
            <person name="DiCuccio M."/>
            <person name="Hlavina W."/>
            <person name="Kapustin Y."/>
            <person name="Meric P."/>
            <person name="Maglott D."/>
            <person name="Birtle Z."/>
            <person name="Marques A.C."/>
            <person name="Graves T."/>
            <person name="Zhou S."/>
            <person name="Teague B."/>
            <person name="Potamousis K."/>
            <person name="Churas C."/>
            <person name="Place M."/>
            <person name="Herschleb J."/>
            <person name="Runnheim R."/>
            <person name="Forrest D."/>
            <person name="Amos-Landgraf J."/>
            <person name="Schwartz D.C."/>
            <person name="Cheng Z."/>
            <person name="Lindblad-Toh K."/>
            <person name="Eichler E.E."/>
            <person name="Ponting C.P."/>
        </authorList>
    </citation>
    <scope>NUCLEOTIDE SEQUENCE [LARGE SCALE GENOMIC DNA]</scope>
    <source>
        <strain>C57BL/6J</strain>
    </source>
</reference>
<reference key="4">
    <citation type="journal article" date="2004" name="Genome Res.">
        <title>The status, quality, and expansion of the NIH full-length cDNA project: the Mammalian Gene Collection (MGC).</title>
        <authorList>
            <consortium name="The MGC Project Team"/>
        </authorList>
    </citation>
    <scope>NUCLEOTIDE SEQUENCE [LARGE SCALE MRNA] (ISOFORMS 1 AND 2)</scope>
    <source>
        <strain>C57BL/6J</strain>
        <tissue>Brain</tissue>
        <tissue>Mammary gland</tissue>
    </source>
</reference>
<reference key="5">
    <citation type="journal article" date="2003" name="Biochem. Biophys. Res. Commun.">
        <title>Molecular cloning of mammalian Spred-3 which suppresses tyrosine kinase-mediated Erk activation.</title>
        <authorList>
            <person name="Kato R."/>
            <person name="Nonami A."/>
            <person name="Taketomi T."/>
            <person name="Wakioka T."/>
            <person name="Kuroiwa A."/>
            <person name="Matsuda Y."/>
            <person name="Yoshimura A."/>
        </authorList>
    </citation>
    <scope>TISSUE SPECIFICITY</scope>
</reference>
<reference key="6">
    <citation type="journal article" date="2004" name="Histochem. Cell Biol.">
        <title>Expression and subcellular localization of Spred proteins in mouse and human tissues.</title>
        <authorList>
            <person name="Engelhardt C.M."/>
            <person name="Bundschu K."/>
            <person name="Messerschmitt M."/>
            <person name="Renne T."/>
            <person name="Walter U."/>
            <person name="Reinhard M."/>
            <person name="Schuh K."/>
        </authorList>
    </citation>
    <scope>TISSUE SPECIFICITY</scope>
</reference>
<reference key="7">
    <citation type="journal article" date="2004" name="J. Biol. Chem.">
        <title>Spred-1 negatively regulates interleukin-3-mediated ERK/mitogen-activated protein (MAP) kinase activation in hematopoietic cells.</title>
        <authorList>
            <person name="Nonami A."/>
            <person name="Kato R."/>
            <person name="Taniguchi K."/>
            <person name="Yoshiga D."/>
            <person name="Taketomi T."/>
            <person name="Fukuyama S."/>
            <person name="Harada M."/>
            <person name="Sasaki A."/>
            <person name="Yoshimura A."/>
        </authorList>
    </citation>
    <scope>FUNCTION</scope>
    <scope>TISSUE SPECIFICITY</scope>
</reference>
<reference key="8">
    <citation type="journal article" date="2008" name="J. Biol. Chem.">
        <title>Tesk1 interacts with Spry2 to abrogate its inhibition of ERK phosphorylation downstream of receptor tyrosine kinase signaling.</title>
        <authorList>
            <person name="Chandramouli S."/>
            <person name="Yu C.Y."/>
            <person name="Yusoff P."/>
            <person name="Lao D.H."/>
            <person name="Leong H.F."/>
            <person name="Mizuno K."/>
            <person name="Guy G.R."/>
        </authorList>
    </citation>
    <scope>INTERACTION WITH TESK1</scope>
</reference>
<reference key="9">
    <citation type="journal article" date="2009" name="Immunity">
        <title>The phagosomal proteome in interferon-gamma-activated macrophages.</title>
        <authorList>
            <person name="Trost M."/>
            <person name="English L."/>
            <person name="Lemieux S."/>
            <person name="Courcelles M."/>
            <person name="Desjardins M."/>
            <person name="Thibault P."/>
        </authorList>
    </citation>
    <scope>PHOSPHORYLATION [LARGE SCALE ANALYSIS] AT SER-239</scope>
    <scope>IDENTIFICATION BY MASS SPECTROMETRY [LARGE SCALE ANALYSIS]</scope>
</reference>
<reference key="10">
    <citation type="journal article" date="2010" name="Cell">
        <title>A tissue-specific atlas of mouse protein phosphorylation and expression.</title>
        <authorList>
            <person name="Huttlin E.L."/>
            <person name="Jedrychowski M.P."/>
            <person name="Elias J.E."/>
            <person name="Goswami T."/>
            <person name="Rad R."/>
            <person name="Beausoleil S.A."/>
            <person name="Villen J."/>
            <person name="Haas W."/>
            <person name="Sowa M.E."/>
            <person name="Gygi S.P."/>
        </authorList>
    </citation>
    <scope>PHOSPHORYLATION [LARGE SCALE ANALYSIS] AT SER-239</scope>
    <scope>IDENTIFICATION BY MASS SPECTROMETRY [LARGE SCALE ANALYSIS]</scope>
    <source>
        <tissue>Brain</tissue>
        <tissue>Heart</tissue>
        <tissue>Kidney</tissue>
        <tissue>Lung</tissue>
        <tissue>Spleen</tissue>
    </source>
</reference>
<reference key="11">
    <citation type="journal article" date="2014" name="Hum. Mol. Genet.">
        <title>The palmitoyl acyltransferase HIP14 shares a high proportion of interactors with huntingtin: implications for a role in the pathogenesis of Huntington's disease.</title>
        <authorList>
            <person name="Butland S.L."/>
            <person name="Sanders S.S."/>
            <person name="Schmidt M.E."/>
            <person name="Riechers S.P."/>
            <person name="Lin D.T."/>
            <person name="Martin D.D."/>
            <person name="Vaid K."/>
            <person name="Graham R.K."/>
            <person name="Singaraja R.R."/>
            <person name="Wanker E.E."/>
            <person name="Conibear E."/>
            <person name="Hayden M.R."/>
        </authorList>
    </citation>
    <scope>INTERACTION WITH ZDHHC17</scope>
    <scope>PALMITOYLATION</scope>
</reference>
<reference key="12">
    <citation type="journal article" date="2015" name="Exp. Eye Res.">
        <title>Negative regulation of TGFbeta-induced lens epithelial to mesenchymal transition (EMT) by RTK antagonists.</title>
        <authorList>
            <person name="Zhao G."/>
            <person name="Wojciechowski M.C."/>
            <person name="Jee S."/>
            <person name="Boros J."/>
            <person name="McAvoy J.W."/>
            <person name="Lovicu F.J."/>
        </authorList>
    </citation>
    <scope>FUNCTION</scope>
</reference>
<reference key="13">
    <citation type="journal article" date="2018" name="Exp. Eye Res.">
        <title>Negative regulation of lens fiber cell differentiation by RTK antagonists Spry and Spred.</title>
        <authorList>
            <person name="Zhao G."/>
            <person name="Bailey C.G."/>
            <person name="Feng Y."/>
            <person name="Rasko J."/>
            <person name="Lovicu F.J."/>
        </authorList>
    </citation>
    <scope>FUNCTION</scope>
</reference>
<evidence type="ECO:0000250" key="1"/>
<evidence type="ECO:0000250" key="2">
    <source>
        <dbReference type="UniProtKB" id="Q7Z699"/>
    </source>
</evidence>
<evidence type="ECO:0000255" key="3">
    <source>
        <dbReference type="PROSITE-ProRule" id="PRU00410"/>
    </source>
</evidence>
<evidence type="ECO:0000255" key="4">
    <source>
        <dbReference type="PROSITE-ProRule" id="PRU00572"/>
    </source>
</evidence>
<evidence type="ECO:0000255" key="5">
    <source>
        <dbReference type="PROSITE-ProRule" id="PRU00821"/>
    </source>
</evidence>
<evidence type="ECO:0000256" key="6">
    <source>
        <dbReference type="SAM" id="MobiDB-lite"/>
    </source>
</evidence>
<evidence type="ECO:0000269" key="7">
    <source>
    </source>
</evidence>
<evidence type="ECO:0000269" key="8">
    <source>
    </source>
</evidence>
<evidence type="ECO:0000269" key="9">
    <source>
    </source>
</evidence>
<evidence type="ECO:0000269" key="10">
    <source>
    </source>
</evidence>
<evidence type="ECO:0000269" key="11">
    <source>
    </source>
</evidence>
<evidence type="ECO:0000269" key="12">
    <source>
    </source>
</evidence>
<evidence type="ECO:0000269" key="13">
    <source>
    </source>
</evidence>
<evidence type="ECO:0000269" key="14">
    <source>
    </source>
</evidence>
<evidence type="ECO:0000303" key="15">
    <source>
    </source>
</evidence>
<evidence type="ECO:0000305" key="16"/>
<evidence type="ECO:0007744" key="17">
    <source>
    </source>
</evidence>
<evidence type="ECO:0007744" key="18">
    <source>
    </source>
</evidence>
<proteinExistence type="evidence at protein level"/>
<dbReference type="EMBL" id="AB063495">
    <property type="protein sequence ID" value="BAB62848.1"/>
    <property type="molecule type" value="mRNA"/>
</dbReference>
<dbReference type="EMBL" id="AK155065">
    <property type="protein sequence ID" value="BAE33024.1"/>
    <property type="molecule type" value="mRNA"/>
</dbReference>
<dbReference type="EMBL" id="AL807741">
    <property type="status" value="NOT_ANNOTATED_CDS"/>
    <property type="molecule type" value="Genomic_DNA"/>
</dbReference>
<dbReference type="EMBL" id="AL928959">
    <property type="status" value="NOT_ANNOTATED_CDS"/>
    <property type="molecule type" value="Genomic_DNA"/>
</dbReference>
<dbReference type="EMBL" id="BC057874">
    <property type="protein sequence ID" value="AAH57874.1"/>
    <property type="molecule type" value="mRNA"/>
</dbReference>
<dbReference type="EMBL" id="BC079606">
    <property type="protein sequence ID" value="AAH79606.1"/>
    <property type="molecule type" value="mRNA"/>
</dbReference>
<dbReference type="CCDS" id="CCDS16570.1">
    <molecule id="Q924S8-1"/>
</dbReference>
<dbReference type="CCDS" id="CCDS71115.1">
    <molecule id="Q924S8-2"/>
</dbReference>
<dbReference type="RefSeq" id="NP_001264185.1">
    <molecule id="Q924S8-2"/>
    <property type="nucleotide sequence ID" value="NM_001277256.2"/>
</dbReference>
<dbReference type="RefSeq" id="NP_277059.1">
    <molecule id="Q924S8-1"/>
    <property type="nucleotide sequence ID" value="NM_033524.4"/>
</dbReference>
<dbReference type="SMR" id="Q924S8"/>
<dbReference type="BioGRID" id="227829">
    <property type="interactions" value="1"/>
</dbReference>
<dbReference type="FunCoup" id="Q924S8">
    <property type="interactions" value="3525"/>
</dbReference>
<dbReference type="IntAct" id="Q924S8">
    <property type="interactions" value="3"/>
</dbReference>
<dbReference type="MINT" id="Q924S8"/>
<dbReference type="STRING" id="10090.ENSMUSP00000028829"/>
<dbReference type="GlyGen" id="Q924S8">
    <property type="glycosylation" value="2 sites, 1 O-linked glycan (2 sites)"/>
</dbReference>
<dbReference type="iPTMnet" id="Q924S8"/>
<dbReference type="PhosphoSitePlus" id="Q924S8"/>
<dbReference type="SwissPalm" id="Q924S8"/>
<dbReference type="PaxDb" id="10090-ENSMUSP00000028829"/>
<dbReference type="PeptideAtlas" id="Q924S8"/>
<dbReference type="ProteomicsDB" id="263325">
    <molecule id="Q924S8-1"/>
</dbReference>
<dbReference type="ProteomicsDB" id="263326">
    <molecule id="Q924S8-2"/>
</dbReference>
<dbReference type="Antibodypedia" id="22853">
    <property type="antibodies" value="370 antibodies from 32 providers"/>
</dbReference>
<dbReference type="DNASU" id="114715"/>
<dbReference type="Ensembl" id="ENSMUST00000028829.13">
    <molecule id="Q924S8-1"/>
    <property type="protein sequence ID" value="ENSMUSP00000028829.7"/>
    <property type="gene ID" value="ENSMUSG00000027351.15"/>
</dbReference>
<dbReference type="Ensembl" id="ENSMUST00000110901.2">
    <molecule id="Q924S8-2"/>
    <property type="protein sequence ID" value="ENSMUSP00000106526.2"/>
    <property type="gene ID" value="ENSMUSG00000027351.15"/>
</dbReference>
<dbReference type="GeneID" id="114715"/>
<dbReference type="KEGG" id="mmu:114715"/>
<dbReference type="UCSC" id="uc008lrh.2">
    <molecule id="Q924S8-2"/>
    <property type="organism name" value="mouse"/>
</dbReference>
<dbReference type="UCSC" id="uc008lri.2">
    <molecule id="Q924S8-1"/>
    <property type="organism name" value="mouse"/>
</dbReference>
<dbReference type="AGR" id="MGI:2150016"/>
<dbReference type="CTD" id="161742"/>
<dbReference type="MGI" id="MGI:2150016">
    <property type="gene designation" value="Spred1"/>
</dbReference>
<dbReference type="VEuPathDB" id="HostDB:ENSMUSG00000027351"/>
<dbReference type="eggNOG" id="KOG4590">
    <property type="taxonomic scope" value="Eukaryota"/>
</dbReference>
<dbReference type="GeneTree" id="ENSGT00940000159180"/>
<dbReference type="HOGENOM" id="CLU_038867_1_1_1"/>
<dbReference type="InParanoid" id="Q924S8"/>
<dbReference type="OMA" id="KKPDYLY"/>
<dbReference type="OrthoDB" id="5786858at2759"/>
<dbReference type="PhylomeDB" id="Q924S8"/>
<dbReference type="TreeFam" id="TF321411"/>
<dbReference type="Reactome" id="R-MMU-5658442">
    <property type="pathway name" value="Regulation of RAS by GAPs"/>
</dbReference>
<dbReference type="Reactome" id="R-MMU-5658623">
    <property type="pathway name" value="FGFRL1 modulation of FGFR1 signaling"/>
</dbReference>
<dbReference type="BioGRID-ORCS" id="114715">
    <property type="hits" value="3 hits in 81 CRISPR screens"/>
</dbReference>
<dbReference type="ChiTaRS" id="Spred1">
    <property type="organism name" value="mouse"/>
</dbReference>
<dbReference type="PRO" id="PR:Q924S8"/>
<dbReference type="Proteomes" id="UP000000589">
    <property type="component" value="Chromosome 2"/>
</dbReference>
<dbReference type="RNAct" id="Q924S8">
    <property type="molecule type" value="protein"/>
</dbReference>
<dbReference type="Bgee" id="ENSMUSG00000027351">
    <property type="expression patterns" value="Expressed in condyle and 249 other cell types or tissues"/>
</dbReference>
<dbReference type="GO" id="GO:0005901">
    <property type="term" value="C:caveola"/>
    <property type="evidence" value="ECO:0007669"/>
    <property type="project" value="UniProtKB-SubCell"/>
</dbReference>
<dbReference type="GO" id="GO:0005737">
    <property type="term" value="C:cytoplasm"/>
    <property type="evidence" value="ECO:0000250"/>
    <property type="project" value="UniProtKB"/>
</dbReference>
<dbReference type="GO" id="GO:0031410">
    <property type="term" value="C:cytoplasmic vesicle"/>
    <property type="evidence" value="ECO:0007669"/>
    <property type="project" value="Ensembl"/>
</dbReference>
<dbReference type="GO" id="GO:0005829">
    <property type="term" value="C:cytosol"/>
    <property type="evidence" value="ECO:0007669"/>
    <property type="project" value="Ensembl"/>
</dbReference>
<dbReference type="GO" id="GO:0005654">
    <property type="term" value="C:nucleoplasm"/>
    <property type="evidence" value="ECO:0007669"/>
    <property type="project" value="Ensembl"/>
</dbReference>
<dbReference type="GO" id="GO:0005886">
    <property type="term" value="C:plasma membrane"/>
    <property type="evidence" value="ECO:0000250"/>
    <property type="project" value="UniProtKB"/>
</dbReference>
<dbReference type="GO" id="GO:0019902">
    <property type="term" value="F:phosphatase binding"/>
    <property type="evidence" value="ECO:0000250"/>
    <property type="project" value="UniProtKB"/>
</dbReference>
<dbReference type="GO" id="GO:0019901">
    <property type="term" value="F:protein kinase binding"/>
    <property type="evidence" value="ECO:0000353"/>
    <property type="project" value="BHF-UCL"/>
</dbReference>
<dbReference type="GO" id="GO:0030291">
    <property type="term" value="F:protein serine/threonine kinase inhibitor activity"/>
    <property type="evidence" value="ECO:0000314"/>
    <property type="project" value="BHF-UCL"/>
</dbReference>
<dbReference type="GO" id="GO:0005173">
    <property type="term" value="F:stem cell factor receptor binding"/>
    <property type="evidence" value="ECO:0000353"/>
    <property type="project" value="MGI"/>
</dbReference>
<dbReference type="GO" id="GO:0016525">
    <property type="term" value="P:negative regulation of angiogenesis"/>
    <property type="evidence" value="ECO:0000315"/>
    <property type="project" value="BHF-UCL"/>
</dbReference>
<dbReference type="GO" id="GO:0090051">
    <property type="term" value="P:negative regulation of cell migration involved in sprouting angiogenesis"/>
    <property type="evidence" value="ECO:0000314"/>
    <property type="project" value="BHF-UCL"/>
</dbReference>
<dbReference type="GO" id="GO:0010719">
    <property type="term" value="P:negative regulation of epithelial to mesenchymal transition"/>
    <property type="evidence" value="ECO:0000314"/>
    <property type="project" value="UniProtKB"/>
</dbReference>
<dbReference type="GO" id="GO:0070373">
    <property type="term" value="P:negative regulation of ERK1 and ERK2 cascade"/>
    <property type="evidence" value="ECO:0000314"/>
    <property type="project" value="UniProtKB"/>
</dbReference>
<dbReference type="GO" id="GO:1902532">
    <property type="term" value="P:negative regulation of intracellular signal transduction"/>
    <property type="evidence" value="ECO:0000314"/>
    <property type="project" value="BHF-UCL"/>
</dbReference>
<dbReference type="GO" id="GO:1902747">
    <property type="term" value="P:negative regulation of lens fiber cell differentiation"/>
    <property type="evidence" value="ECO:0000314"/>
    <property type="project" value="UniProtKB"/>
</dbReference>
<dbReference type="GO" id="GO:0043409">
    <property type="term" value="P:negative regulation of MAPK cascade"/>
    <property type="evidence" value="ECO:0000315"/>
    <property type="project" value="MGI"/>
</dbReference>
<dbReference type="GO" id="GO:0030512">
    <property type="term" value="P:negative regulation of transforming growth factor beta receptor signaling pathway"/>
    <property type="evidence" value="ECO:0000314"/>
    <property type="project" value="UniProtKB"/>
</dbReference>
<dbReference type="GO" id="GO:0043517">
    <property type="term" value="P:positive regulation of DNA damage response, signal transduction by p53 class mediator"/>
    <property type="evidence" value="ECO:0000314"/>
    <property type="project" value="BHF-UCL"/>
</dbReference>
<dbReference type="GO" id="GO:0060979">
    <property type="term" value="P:vasculogenesis involved in coronary vascular morphogenesis"/>
    <property type="evidence" value="ECO:0007669"/>
    <property type="project" value="Ensembl"/>
</dbReference>
<dbReference type="CDD" id="cd10574">
    <property type="entry name" value="EVH1_SPRED-like"/>
    <property type="match status" value="1"/>
</dbReference>
<dbReference type="FunFam" id="2.30.29.30:FF:000052">
    <property type="entry name" value="Sprouty-related, EVH1 domain containing 2"/>
    <property type="match status" value="1"/>
</dbReference>
<dbReference type="Gene3D" id="2.30.29.30">
    <property type="entry name" value="Pleckstrin-homology domain (PH domain)/Phosphotyrosine-binding domain (PTB)"/>
    <property type="match status" value="1"/>
</dbReference>
<dbReference type="InterPro" id="IPR023337">
    <property type="entry name" value="KBD"/>
</dbReference>
<dbReference type="InterPro" id="IPR011993">
    <property type="entry name" value="PH-like_dom_sf"/>
</dbReference>
<dbReference type="InterPro" id="IPR041937">
    <property type="entry name" value="SPRE_EVH1"/>
</dbReference>
<dbReference type="InterPro" id="IPR007875">
    <property type="entry name" value="Sprouty"/>
</dbReference>
<dbReference type="InterPro" id="IPR000697">
    <property type="entry name" value="WH1/EVH1_dom"/>
</dbReference>
<dbReference type="PANTHER" id="PTHR11202:SF18">
    <property type="entry name" value="SPROUTY-RELATED, EVH1 DOMAIN-CONTAINING PROTEIN 1"/>
    <property type="match status" value="1"/>
</dbReference>
<dbReference type="PANTHER" id="PTHR11202">
    <property type="entry name" value="SPROUTY-RELATED, EVH1 DOMAIN-CONTAINING PROTEIN FAMILY MEMBER"/>
    <property type="match status" value="1"/>
</dbReference>
<dbReference type="Pfam" id="PF05210">
    <property type="entry name" value="Sprouty"/>
    <property type="match status" value="1"/>
</dbReference>
<dbReference type="Pfam" id="PF00568">
    <property type="entry name" value="WH1"/>
    <property type="match status" value="1"/>
</dbReference>
<dbReference type="SMART" id="SM00461">
    <property type="entry name" value="WH1"/>
    <property type="match status" value="1"/>
</dbReference>
<dbReference type="SUPFAM" id="SSF50729">
    <property type="entry name" value="PH domain-like"/>
    <property type="match status" value="1"/>
</dbReference>
<dbReference type="PROSITE" id="PS51488">
    <property type="entry name" value="KBD"/>
    <property type="match status" value="1"/>
</dbReference>
<dbReference type="PROSITE" id="PS51227">
    <property type="entry name" value="SPR"/>
    <property type="match status" value="1"/>
</dbReference>
<dbReference type="PROSITE" id="PS50229">
    <property type="entry name" value="WH1"/>
    <property type="match status" value="1"/>
</dbReference>
<accession>Q924S8</accession>
<accession>Q3U2W6</accession>
<accession>Q6PET8</accession>
<protein>
    <recommendedName>
        <fullName>Sprouty-related, EVH1 domain-containing protein 1</fullName>
        <shortName>Spred-1</shortName>
    </recommendedName>
</protein>
<feature type="initiator methionine" description="Removed" evidence="2">
    <location>
        <position position="1"/>
    </location>
</feature>
<feature type="chain" id="PRO_0000076908" description="Sprouty-related, EVH1 domain-containing protein 1">
    <location>
        <begin position="2"/>
        <end position="444"/>
    </location>
</feature>
<feature type="domain" description="WH1" evidence="3">
    <location>
        <begin position="6"/>
        <end position="123"/>
    </location>
</feature>
<feature type="domain" description="KBD" evidence="5">
    <location>
        <begin position="234"/>
        <end position="286"/>
    </location>
</feature>
<feature type="domain" description="SPR" evidence="4">
    <location>
        <begin position="334"/>
        <end position="442"/>
    </location>
</feature>
<feature type="region of interest" description="Disordered" evidence="6">
    <location>
        <begin position="268"/>
        <end position="287"/>
    </location>
</feature>
<feature type="region of interest" description="Required for interaction with TESK1" evidence="11">
    <location>
        <begin position="333"/>
        <end position="444"/>
    </location>
</feature>
<feature type="modified residue" description="N-acetylserine" evidence="2">
    <location>
        <position position="2"/>
    </location>
</feature>
<feature type="modified residue" description="N6-methyllysine" evidence="2">
    <location>
        <position position="225"/>
    </location>
</feature>
<feature type="modified residue" description="Phosphoserine" evidence="17 18">
    <location>
        <position position="239"/>
    </location>
</feature>
<feature type="modified residue" description="Phosphoserine" evidence="2">
    <location>
        <position position="309"/>
    </location>
</feature>
<feature type="splice variant" id="VSP_012412" description="In isoform 2." evidence="15">
    <original>IPFSQQGLDIQSRSMEYVQRQISKECGSLKSQTR</original>
    <variation>VRRRILFPCIAYIEKLGVLQNTKALRSFPCYETI</variation>
    <location>
        <begin position="196"/>
        <end position="229"/>
    </location>
</feature>
<feature type="splice variant" id="VSP_012413" description="In isoform 2." evidence="15">
    <location>
        <begin position="230"/>
        <end position="444"/>
    </location>
</feature>
<feature type="sequence conflict" description="In Ref. 2; AAH57874." evidence="16" ref="2">
    <original>T</original>
    <variation>I</variation>
    <location>
        <position position="144"/>
    </location>
</feature>
<name>SPRE1_MOUSE</name>
<organism>
    <name type="scientific">Mus musculus</name>
    <name type="common">Mouse</name>
    <dbReference type="NCBI Taxonomy" id="10090"/>
    <lineage>
        <taxon>Eukaryota</taxon>
        <taxon>Metazoa</taxon>
        <taxon>Chordata</taxon>
        <taxon>Craniata</taxon>
        <taxon>Vertebrata</taxon>
        <taxon>Euteleostomi</taxon>
        <taxon>Mammalia</taxon>
        <taxon>Eutheria</taxon>
        <taxon>Euarchontoglires</taxon>
        <taxon>Glires</taxon>
        <taxon>Rodentia</taxon>
        <taxon>Myomorpha</taxon>
        <taxon>Muroidea</taxon>
        <taxon>Muridae</taxon>
        <taxon>Murinae</taxon>
        <taxon>Mus</taxon>
        <taxon>Mus</taxon>
    </lineage>
</organism>
<gene>
    <name type="primary">Spred1</name>
</gene>